<proteinExistence type="evidence at protein level"/>
<name>DLDH_PSEFL</name>
<evidence type="ECO:0000250" key="1"/>
<evidence type="ECO:0000269" key="2">
    <source>
    </source>
</evidence>
<evidence type="ECO:0000269" key="3">
    <source>
    </source>
</evidence>
<evidence type="ECO:0000305" key="4"/>
<evidence type="ECO:0007829" key="5">
    <source>
        <dbReference type="PDB" id="1LPF"/>
    </source>
</evidence>
<comment type="function">
    <text>The branched-chain alpha-keto dehydrogenase complex catalyzes the overall conversion of alpha-keto acids to acyl-CoA and CO(2). It contains multiple copies of 3 enzymatic components: branched-chain alpha-keto acid decarboxylase (E1), lipoamide acyltransferase (E2) and lipoamide dehydrogenase (E3).</text>
</comment>
<comment type="catalytic activity">
    <reaction>
        <text>N(6)-[(R)-dihydrolipoyl]-L-lysyl-[protein] + NAD(+) = N(6)-[(R)-lipoyl]-L-lysyl-[protein] + NADH + H(+)</text>
        <dbReference type="Rhea" id="RHEA:15045"/>
        <dbReference type="Rhea" id="RHEA-COMP:10474"/>
        <dbReference type="Rhea" id="RHEA-COMP:10475"/>
        <dbReference type="ChEBI" id="CHEBI:15378"/>
        <dbReference type="ChEBI" id="CHEBI:57540"/>
        <dbReference type="ChEBI" id="CHEBI:57945"/>
        <dbReference type="ChEBI" id="CHEBI:83099"/>
        <dbReference type="ChEBI" id="CHEBI:83100"/>
        <dbReference type="EC" id="1.8.1.4"/>
    </reaction>
</comment>
<comment type="cofactor">
    <cofactor>
        <name>FAD</name>
        <dbReference type="ChEBI" id="CHEBI:57692"/>
    </cofactor>
    <text>Binds 1 FAD per subunit.</text>
</comment>
<comment type="subunit">
    <text evidence="3">Homodimer.</text>
</comment>
<comment type="subcellular location">
    <subcellularLocation>
        <location>Cytoplasm</location>
    </subcellularLocation>
</comment>
<comment type="miscellaneous">
    <text>The active site is a redox-active disulfide bond.</text>
</comment>
<comment type="similarity">
    <text evidence="4">Belongs to the class-I pyridine nucleotide-disulfide oxidoreductase family.</text>
</comment>
<organism>
    <name type="scientific">Pseudomonas fluorescens</name>
    <dbReference type="NCBI Taxonomy" id="294"/>
    <lineage>
        <taxon>Bacteria</taxon>
        <taxon>Pseudomonadati</taxon>
        <taxon>Pseudomonadota</taxon>
        <taxon>Gammaproteobacteria</taxon>
        <taxon>Pseudomonadales</taxon>
        <taxon>Pseudomonadaceae</taxon>
        <taxon>Pseudomonas</taxon>
    </lineage>
</organism>
<gene>
    <name type="primary">lpd</name>
</gene>
<reference key="1">
    <citation type="journal article" date="1989" name="J. Gen. Microbiol.">
        <title>Molecular cloning and sequence determination of the lpd gene encoding lipoamide dehydrogenase from Pseudomonas fluorescens.</title>
        <authorList>
            <person name="Benen J.A.E."/>
            <person name="van Berkel W.J.H."/>
            <person name="van Dongen W.M.A.M."/>
            <person name="Mueller F."/>
            <person name="de Kok A."/>
        </authorList>
    </citation>
    <scope>NUCLEOTIDE SEQUENCE [GENOMIC DNA]</scope>
    <scope>PROTEIN SEQUENCE OF 2-23</scope>
</reference>
<reference key="2">
    <citation type="journal article" date="1993" name="J. Mol. Biol.">
        <title>Three-dimensional structure of lipoamide dehydrogenase from Pseudomonas fluorescens at 2.8-A resolution. Analysis of redox and thermostability properties.</title>
        <authorList>
            <person name="Mattevi A."/>
            <person name="Obmolova G."/>
            <person name="Kalk K.H."/>
            <person name="van Berkel W.J.H."/>
            <person name="Hol W.G.J."/>
        </authorList>
    </citation>
    <scope>X-RAY CRYSTALLOGRAPHY (2.8 ANGSTROMS) IN COMPLEX WITH FAD</scope>
    <scope>SUBUNIT</scope>
    <scope>DISULFIDE BOND</scope>
</reference>
<keyword id="KW-0002">3D-structure</keyword>
<keyword id="KW-0963">Cytoplasm</keyword>
<keyword id="KW-0903">Direct protein sequencing</keyword>
<keyword id="KW-1015">Disulfide bond</keyword>
<keyword id="KW-0274">FAD</keyword>
<keyword id="KW-0285">Flavoprotein</keyword>
<keyword id="KW-0520">NAD</keyword>
<keyword id="KW-0560">Oxidoreductase</keyword>
<keyword id="KW-0676">Redox-active center</keyword>
<accession>P14218</accession>
<protein>
    <recommendedName>
        <fullName>Dihydrolipoyl dehydrogenase</fullName>
        <ecNumber>1.8.1.4</ecNumber>
    </recommendedName>
    <alternativeName>
        <fullName>Dihydrolipoamide dehydrogenase</fullName>
    </alternativeName>
    <alternativeName>
        <fullName>E3 component of 2-oxoglutarate dehydrogenase complex</fullName>
    </alternativeName>
</protein>
<sequence length="478" mass="50151">MSQKFDVVVIGAGPGGYVAAIRAAQLGLKTACIEKYIGKEGKVALGGTCLNVGCIPSKALLDSSYKYHEAKEAFKVHGIEAKGVTIDVPAMVARKANIVKNLTGGIATLFKANGVTSFEGHGKLLANKQVEVTGLDGKTQVLEAENVIIASGSRPVEIPPAPLSDDIIVDSTGALEFQAVPKKLGVIGAGVIGLELGSVWARLGAEVTVLEALDKFLPAADEQIAKEALKVLTKQGLNIRLGARVTASEVKKKQVTVTFTDANGEQKETFDKLIVAVGRRPVTTDLLAADSGVTLDERGFIYVDDHCKTSVPGVFAIGDVVRGAMLAHKASEEGVMVAERIAGHKAQMNYDLIPSVIYTHPEIAWVGKTEQTLKAEGVEVNVGTFPFAASGRAMAANDTTGLVKVIADAKTDRVLGVHVIGPSAAELVQQGAIGMEFGTSAEDLGMMVFSHPTLSEALHEAALAVNGHAIHIANRKKR</sequence>
<dbReference type="EC" id="1.8.1.4"/>
<dbReference type="EMBL" id="M28356">
    <property type="protein sequence ID" value="AAA99234.1"/>
    <property type="molecule type" value="Genomic_DNA"/>
</dbReference>
<dbReference type="PDB" id="1LPF">
    <property type="method" value="X-ray"/>
    <property type="resolution" value="2.80 A"/>
    <property type="chains" value="A/B=2-478"/>
</dbReference>
<dbReference type="PDBsum" id="1LPF"/>
<dbReference type="SMR" id="P14218"/>
<dbReference type="DrugBank" id="DB03147">
    <property type="generic name" value="Flavin adenine dinucleotide"/>
</dbReference>
<dbReference type="EvolutionaryTrace" id="P14218"/>
<dbReference type="GO" id="GO:0005737">
    <property type="term" value="C:cytoplasm"/>
    <property type="evidence" value="ECO:0007669"/>
    <property type="project" value="UniProtKB-SubCell"/>
</dbReference>
<dbReference type="GO" id="GO:0004148">
    <property type="term" value="F:dihydrolipoyl dehydrogenase (NADH) activity"/>
    <property type="evidence" value="ECO:0007669"/>
    <property type="project" value="UniProtKB-EC"/>
</dbReference>
<dbReference type="GO" id="GO:0050660">
    <property type="term" value="F:flavin adenine dinucleotide binding"/>
    <property type="evidence" value="ECO:0007669"/>
    <property type="project" value="InterPro"/>
</dbReference>
<dbReference type="GO" id="GO:0006103">
    <property type="term" value="P:2-oxoglutarate metabolic process"/>
    <property type="evidence" value="ECO:0007669"/>
    <property type="project" value="TreeGrafter"/>
</dbReference>
<dbReference type="FunFam" id="3.30.390.30:FF:000001">
    <property type="entry name" value="Dihydrolipoyl dehydrogenase"/>
    <property type="match status" value="1"/>
</dbReference>
<dbReference type="FunFam" id="3.50.50.60:FF:000272">
    <property type="entry name" value="Dihydrolipoyl dehydrogenase"/>
    <property type="match status" value="1"/>
</dbReference>
<dbReference type="FunFam" id="3.50.50.60:FF:000001">
    <property type="entry name" value="Dihydrolipoyl dehydrogenase, mitochondrial"/>
    <property type="match status" value="1"/>
</dbReference>
<dbReference type="Gene3D" id="3.30.390.30">
    <property type="match status" value="1"/>
</dbReference>
<dbReference type="Gene3D" id="3.50.50.60">
    <property type="entry name" value="FAD/NAD(P)-binding domain"/>
    <property type="match status" value="2"/>
</dbReference>
<dbReference type="InterPro" id="IPR050151">
    <property type="entry name" value="Class-I_Pyr_Nuc-Dis_Oxidored"/>
</dbReference>
<dbReference type="InterPro" id="IPR036188">
    <property type="entry name" value="FAD/NAD-bd_sf"/>
</dbReference>
<dbReference type="InterPro" id="IPR023753">
    <property type="entry name" value="FAD/NAD-binding_dom"/>
</dbReference>
<dbReference type="InterPro" id="IPR016156">
    <property type="entry name" value="FAD/NAD-linked_Rdtase_dimer_sf"/>
</dbReference>
<dbReference type="InterPro" id="IPR006258">
    <property type="entry name" value="Lipoamide_DH"/>
</dbReference>
<dbReference type="InterPro" id="IPR001100">
    <property type="entry name" value="Pyr_nuc-diS_OxRdtase"/>
</dbReference>
<dbReference type="InterPro" id="IPR004099">
    <property type="entry name" value="Pyr_nucl-diS_OxRdtase_dimer"/>
</dbReference>
<dbReference type="InterPro" id="IPR012999">
    <property type="entry name" value="Pyr_OxRdtase_I_AS"/>
</dbReference>
<dbReference type="NCBIfam" id="TIGR01350">
    <property type="entry name" value="lipoamide_DH"/>
    <property type="match status" value="1"/>
</dbReference>
<dbReference type="PANTHER" id="PTHR22912:SF224">
    <property type="entry name" value="DIHYDROLIPOYL DEHYDROGENASE"/>
    <property type="match status" value="1"/>
</dbReference>
<dbReference type="PANTHER" id="PTHR22912">
    <property type="entry name" value="DISULFIDE OXIDOREDUCTASE"/>
    <property type="match status" value="1"/>
</dbReference>
<dbReference type="Pfam" id="PF07992">
    <property type="entry name" value="Pyr_redox_2"/>
    <property type="match status" value="1"/>
</dbReference>
<dbReference type="Pfam" id="PF02852">
    <property type="entry name" value="Pyr_redox_dim"/>
    <property type="match status" value="1"/>
</dbReference>
<dbReference type="PIRSF" id="PIRSF000350">
    <property type="entry name" value="Mercury_reductase_MerA"/>
    <property type="match status" value="1"/>
</dbReference>
<dbReference type="PRINTS" id="PR00368">
    <property type="entry name" value="FADPNR"/>
</dbReference>
<dbReference type="PRINTS" id="PR00411">
    <property type="entry name" value="PNDRDTASEI"/>
</dbReference>
<dbReference type="SUPFAM" id="SSF51905">
    <property type="entry name" value="FAD/NAD(P)-binding domain"/>
    <property type="match status" value="1"/>
</dbReference>
<dbReference type="SUPFAM" id="SSF55424">
    <property type="entry name" value="FAD/NAD-linked reductases, dimerisation (C-terminal) domain"/>
    <property type="match status" value="1"/>
</dbReference>
<dbReference type="PROSITE" id="PS00076">
    <property type="entry name" value="PYRIDINE_REDOX_1"/>
    <property type="match status" value="1"/>
</dbReference>
<feature type="initiator methionine" description="Removed" evidence="2">
    <location>
        <position position="1"/>
    </location>
</feature>
<feature type="chain" id="PRO_0000068037" description="Dihydrolipoyl dehydrogenase">
    <location>
        <begin position="2"/>
        <end position="478"/>
    </location>
</feature>
<feature type="active site" description="Proton acceptor" evidence="1">
    <location>
        <position position="451"/>
    </location>
</feature>
<feature type="binding site" evidence="3">
    <location>
        <begin position="34"/>
        <end position="49"/>
    </location>
    <ligand>
        <name>FAD</name>
        <dbReference type="ChEBI" id="CHEBI:57692"/>
    </ligand>
</feature>
<feature type="binding site" evidence="3">
    <location>
        <position position="58"/>
    </location>
    <ligand>
        <name>FAD</name>
        <dbReference type="ChEBI" id="CHEBI:57692"/>
    </ligand>
</feature>
<feature type="binding site" evidence="3">
    <location>
        <position position="122"/>
    </location>
    <ligand>
        <name>FAD</name>
        <dbReference type="ChEBI" id="CHEBI:57692"/>
    </ligand>
</feature>
<feature type="binding site" evidence="1">
    <location>
        <begin position="188"/>
        <end position="192"/>
    </location>
    <ligand>
        <name>NAD(+)</name>
        <dbReference type="ChEBI" id="CHEBI:57540"/>
    </ligand>
</feature>
<feature type="binding site" evidence="1">
    <location>
        <position position="211"/>
    </location>
    <ligand>
        <name>NAD(+)</name>
        <dbReference type="ChEBI" id="CHEBI:57540"/>
    </ligand>
</feature>
<feature type="binding site" evidence="1">
    <location>
        <position position="245"/>
    </location>
    <ligand>
        <name>NAD(+)</name>
        <dbReference type="ChEBI" id="CHEBI:57540"/>
    </ligand>
</feature>
<feature type="binding site" evidence="1">
    <location>
        <begin position="276"/>
        <end position="279"/>
    </location>
    <ligand>
        <name>NAD(+)</name>
        <dbReference type="ChEBI" id="CHEBI:57540"/>
    </ligand>
</feature>
<feature type="binding site" evidence="3">
    <location>
        <position position="319"/>
    </location>
    <ligand>
        <name>FAD</name>
        <dbReference type="ChEBI" id="CHEBI:57692"/>
    </ligand>
</feature>
<feature type="binding site" evidence="3">
    <location>
        <position position="327"/>
    </location>
    <ligand>
        <name>FAD</name>
        <dbReference type="ChEBI" id="CHEBI:57692"/>
    </ligand>
</feature>
<feature type="disulfide bond" description="Redox-active" evidence="3">
    <location>
        <begin position="49"/>
        <end position="54"/>
    </location>
</feature>
<feature type="strand" evidence="5">
    <location>
        <begin position="4"/>
        <end position="10"/>
    </location>
</feature>
<feature type="helix" evidence="5">
    <location>
        <begin position="14"/>
        <end position="25"/>
    </location>
</feature>
<feature type="strand" evidence="5">
    <location>
        <begin position="30"/>
        <end position="34"/>
    </location>
</feature>
<feature type="strand" evidence="5">
    <location>
        <begin position="39"/>
        <end position="43"/>
    </location>
</feature>
<feature type="helix" evidence="5">
    <location>
        <begin position="47"/>
        <end position="52"/>
    </location>
</feature>
<feature type="helix" evidence="5">
    <location>
        <begin position="54"/>
        <end position="72"/>
    </location>
</feature>
<feature type="helix" evidence="5">
    <location>
        <begin position="75"/>
        <end position="77"/>
    </location>
</feature>
<feature type="strand" evidence="5">
    <location>
        <begin position="79"/>
        <end position="86"/>
    </location>
</feature>
<feature type="helix" evidence="5">
    <location>
        <begin position="88"/>
        <end position="113"/>
    </location>
</feature>
<feature type="strand" evidence="5">
    <location>
        <begin position="115"/>
        <end position="124"/>
    </location>
</feature>
<feature type="helix" evidence="5">
    <location>
        <begin position="126"/>
        <end position="128"/>
    </location>
</feature>
<feature type="strand" evidence="5">
    <location>
        <begin position="129"/>
        <end position="134"/>
    </location>
</feature>
<feature type="strand" evidence="5">
    <location>
        <begin position="139"/>
        <end position="149"/>
    </location>
</feature>
<feature type="strand" evidence="5">
    <location>
        <begin position="153"/>
        <end position="155"/>
    </location>
</feature>
<feature type="turn" evidence="5">
    <location>
        <begin position="165"/>
        <end position="167"/>
    </location>
</feature>
<feature type="helix" evidence="5">
    <location>
        <begin position="171"/>
        <end position="174"/>
    </location>
</feature>
<feature type="strand" evidence="5">
    <location>
        <begin position="182"/>
        <end position="187"/>
    </location>
</feature>
<feature type="helix" evidence="5">
    <location>
        <begin position="191"/>
        <end position="202"/>
    </location>
</feature>
<feature type="strand" evidence="5">
    <location>
        <begin position="206"/>
        <end position="210"/>
    </location>
</feature>
<feature type="strand" evidence="5">
    <location>
        <begin position="212"/>
        <end position="217"/>
    </location>
</feature>
<feature type="helix" evidence="5">
    <location>
        <begin position="222"/>
        <end position="235"/>
    </location>
</feature>
<feature type="strand" evidence="5">
    <location>
        <begin position="238"/>
        <end position="240"/>
    </location>
</feature>
<feature type="strand" evidence="5">
    <location>
        <begin position="244"/>
        <end position="247"/>
    </location>
</feature>
<feature type="strand" evidence="5">
    <location>
        <begin position="254"/>
        <end position="260"/>
    </location>
</feature>
<feature type="strand" evidence="5">
    <location>
        <begin position="265"/>
        <end position="271"/>
    </location>
</feature>
<feature type="strand" evidence="5">
    <location>
        <begin position="273"/>
        <end position="275"/>
    </location>
</feature>
<feature type="strand" evidence="5">
    <location>
        <begin position="279"/>
        <end position="281"/>
    </location>
</feature>
<feature type="turn" evidence="5">
    <location>
        <begin position="284"/>
        <end position="286"/>
    </location>
</feature>
<feature type="strand" evidence="5">
    <location>
        <begin position="308"/>
        <end position="311"/>
    </location>
</feature>
<feature type="strand" evidence="5">
    <location>
        <begin position="314"/>
        <end position="316"/>
    </location>
</feature>
<feature type="helix" evidence="5">
    <location>
        <begin position="318"/>
        <end position="320"/>
    </location>
</feature>
<feature type="strand" evidence="5">
    <location>
        <begin position="321"/>
        <end position="323"/>
    </location>
</feature>
<feature type="helix" evidence="5">
    <location>
        <begin position="327"/>
        <end position="341"/>
    </location>
</feature>
<feature type="helix" evidence="5">
    <location>
        <begin position="350"/>
        <end position="352"/>
    </location>
</feature>
<feature type="strand" evidence="5">
    <location>
        <begin position="355"/>
        <end position="357"/>
    </location>
</feature>
<feature type="strand" evidence="5">
    <location>
        <begin position="359"/>
        <end position="367"/>
    </location>
</feature>
<feature type="helix" evidence="5">
    <location>
        <begin position="370"/>
        <end position="375"/>
    </location>
</feature>
<feature type="strand" evidence="5">
    <location>
        <begin position="380"/>
        <end position="386"/>
    </location>
</feature>
<feature type="helix" evidence="5">
    <location>
        <begin position="387"/>
        <end position="389"/>
    </location>
</feature>
<feature type="helix" evidence="5">
    <location>
        <begin position="391"/>
        <end position="396"/>
    </location>
</feature>
<feature type="strand" evidence="5">
    <location>
        <begin position="402"/>
        <end position="411"/>
    </location>
</feature>
<feature type="strand" evidence="5">
    <location>
        <begin position="413"/>
        <end position="421"/>
    </location>
</feature>
<feature type="helix" evidence="5">
    <location>
        <begin position="424"/>
        <end position="436"/>
    </location>
</feature>
<feature type="helix" evidence="5">
    <location>
        <begin position="441"/>
        <end position="445"/>
    </location>
</feature>
<feature type="helix" evidence="5">
    <location>
        <begin position="455"/>
        <end position="465"/>
    </location>
</feature>